<keyword id="KW-0007">Acetylation</keyword>
<keyword id="KW-0175">Coiled coil</keyword>
<keyword id="KW-0903">Direct protein sequencing</keyword>
<keyword id="KW-1015">Disulfide bond</keyword>
<keyword id="KW-0325">Glycoprotein</keyword>
<keyword id="KW-0403">Intermediate filament</keyword>
<keyword id="KW-1017">Isopeptide bond</keyword>
<keyword id="KW-0449">Lipoprotein</keyword>
<keyword id="KW-0488">Methylation</keyword>
<keyword id="KW-0539">Nucleus</keyword>
<keyword id="KW-0597">Phosphoprotein</keyword>
<keyword id="KW-0636">Prenylation</keyword>
<keyword id="KW-1185">Reference proteome</keyword>
<keyword id="KW-0832">Ubl conjugation</keyword>
<reference key="1">
    <citation type="journal article" date="1988" name="Eur. J. Cell Biol.">
        <title>Amino acid sequence and molecular characterization of murine lamin B as deduced from cDNA clones.</title>
        <authorList>
            <person name="Hoeger T.H."/>
            <person name="Krohne G."/>
            <person name="Franke W.W."/>
        </authorList>
    </citation>
    <scope>NUCLEOTIDE SEQUENCE [MRNA]</scope>
    <scope>PARTIAL PROTEIN SEQUENCE</scope>
    <source>
        <tissue>Liver</tissue>
    </source>
</reference>
<reference key="2">
    <citation type="submission" date="1989-10" db="EMBL/GenBank/DDBJ databases">
        <authorList>
            <person name="Hoeger T.H."/>
        </authorList>
    </citation>
    <scope>SEQUENCE REVISION</scope>
</reference>
<reference key="3">
    <citation type="journal article" date="1995" name="Genomics">
        <title>Genomic structure of the mouse gene (Lmnb1) encoding nuclear lamin B1.</title>
        <authorList>
            <person name="Maeno H."/>
            <person name="Sugimoto K."/>
            <person name="Nakajima N."/>
        </authorList>
    </citation>
    <scope>NUCLEOTIDE SEQUENCE [GENOMIC DNA]</scope>
    <source>
        <strain>C3H/He</strain>
    </source>
</reference>
<reference key="4">
    <citation type="journal article" date="2004" name="Genome Res.">
        <title>The status, quality, and expansion of the NIH full-length cDNA project: the Mammalian Gene Collection (MGC).</title>
        <authorList>
            <consortium name="The MGC Project Team"/>
        </authorList>
    </citation>
    <scope>NUCLEOTIDE SEQUENCE [LARGE SCALE MRNA]</scope>
    <source>
        <strain>C57BL/6J</strain>
        <tissue>Brain</tissue>
    </source>
</reference>
<reference key="5">
    <citation type="journal article" date="2007" name="Proc. Natl. Acad. Sci. U.S.A.">
        <title>Large-scale phosphorylation analysis of mouse liver.</title>
        <authorList>
            <person name="Villen J."/>
            <person name="Beausoleil S.A."/>
            <person name="Gerber S.A."/>
            <person name="Gygi S.P."/>
        </authorList>
    </citation>
    <scope>PHOSPHORYLATION [LARGE SCALE ANALYSIS] AT THR-21</scope>
    <scope>IDENTIFICATION BY MASS SPECTROMETRY [LARGE SCALE ANALYSIS]</scope>
    <source>
        <tissue>Liver</tissue>
    </source>
</reference>
<reference key="6">
    <citation type="journal article" date="2009" name="Immunity">
        <title>The phagosomal proteome in interferon-gamma-activated macrophages.</title>
        <authorList>
            <person name="Trost M."/>
            <person name="English L."/>
            <person name="Lemieux S."/>
            <person name="Courcelles M."/>
            <person name="Desjardins M."/>
            <person name="Thibault P."/>
        </authorList>
    </citation>
    <scope>PHOSPHORYLATION [LARGE SCALE ANALYSIS] AT SER-24</scope>
    <scope>IDENTIFICATION BY MASS SPECTROMETRY [LARGE SCALE ANALYSIS]</scope>
</reference>
<reference key="7">
    <citation type="journal article" date="2010" name="Cell">
        <title>A tissue-specific atlas of mouse protein phosphorylation and expression.</title>
        <authorList>
            <person name="Huttlin E.L."/>
            <person name="Jedrychowski M.P."/>
            <person name="Elias J.E."/>
            <person name="Goswami T."/>
            <person name="Rad R."/>
            <person name="Beausoleil S.A."/>
            <person name="Villen J."/>
            <person name="Haas W."/>
            <person name="Sowa M.E."/>
            <person name="Gygi S.P."/>
        </authorList>
    </citation>
    <scope>PHOSPHORYLATION [LARGE SCALE ANALYSIS] AT SER-17 AND THR-21</scope>
    <scope>IDENTIFICATION BY MASS SPECTROMETRY [LARGE SCALE ANALYSIS]</scope>
    <source>
        <tissue>Brain</tissue>
        <tissue>Brown adipose tissue</tissue>
        <tissue>Kidney</tissue>
        <tissue>Lung</tissue>
        <tissue>Spleen</tissue>
        <tissue>Testis</tissue>
    </source>
</reference>
<reference key="8">
    <citation type="journal article" date="2013" name="Mol. Cell">
        <title>SIRT5-mediated lysine desuccinylation impacts diverse metabolic pathways.</title>
        <authorList>
            <person name="Park J."/>
            <person name="Chen Y."/>
            <person name="Tishkoff D.X."/>
            <person name="Peng C."/>
            <person name="Tan M."/>
            <person name="Dai L."/>
            <person name="Xie Z."/>
            <person name="Zhang Y."/>
            <person name="Zwaans B.M."/>
            <person name="Skinner M.E."/>
            <person name="Lombard D.B."/>
            <person name="Zhao Y."/>
        </authorList>
    </citation>
    <scope>ACETYLATION [LARGE SCALE ANALYSIS] AT LYS-112; LYS-272 AND LYS-331</scope>
    <scope>IDENTIFICATION BY MASS SPECTROMETRY [LARGE SCALE ANALYSIS]</scope>
    <source>
        <tissue>Embryonic fibroblast</tissue>
    </source>
</reference>
<reference key="9">
    <citation type="journal article" date="2017" name="Nature">
        <title>The molecular architecture of lamins in somatic cells.</title>
        <authorList>
            <person name="Turgay Y."/>
            <person name="Eibauer M."/>
            <person name="Goldman A.E."/>
            <person name="Shimi T."/>
            <person name="Khayat M."/>
            <person name="Ben-Harush K."/>
            <person name="Dubrovsky-Gaupp A."/>
            <person name="Sapra K.T."/>
            <person name="Goldman R.D."/>
            <person name="Medalia O."/>
        </authorList>
    </citation>
    <scope>FUNCTION</scope>
    <scope>SUBCELLULAR LOCATION</scope>
    <scope>SUBUNIT</scope>
</reference>
<dbReference type="EMBL" id="X16705">
    <property type="protein sequence ID" value="CAA34677.1"/>
    <property type="molecule type" value="mRNA"/>
</dbReference>
<dbReference type="EMBL" id="M35153">
    <property type="protein sequence ID" value="AAC96023.1"/>
    <property type="status" value="ALT_SEQ"/>
    <property type="molecule type" value="mRNA"/>
</dbReference>
<dbReference type="EMBL" id="D50080">
    <property type="protein sequence ID" value="BAA08784.1"/>
    <property type="molecule type" value="Genomic_DNA"/>
</dbReference>
<dbReference type="EMBL" id="BC052729">
    <property type="protein sequence ID" value="AAH52729.1"/>
    <property type="molecule type" value="mRNA"/>
</dbReference>
<dbReference type="EMBL" id="BC058392">
    <property type="protein sequence ID" value="AAH58392.1"/>
    <property type="molecule type" value="mRNA"/>
</dbReference>
<dbReference type="CCDS" id="CCDS29261.1"/>
<dbReference type="PIR" id="S07720">
    <property type="entry name" value="S07720"/>
</dbReference>
<dbReference type="RefSeq" id="NP_034851.2">
    <property type="nucleotide sequence ID" value="NM_010721.2"/>
</dbReference>
<dbReference type="BMRB" id="P14733"/>
<dbReference type="SMR" id="P14733"/>
<dbReference type="BioGRID" id="201177">
    <property type="interactions" value="29"/>
</dbReference>
<dbReference type="FunCoup" id="P14733">
    <property type="interactions" value="3743"/>
</dbReference>
<dbReference type="IntAct" id="P14733">
    <property type="interactions" value="16"/>
</dbReference>
<dbReference type="MINT" id="P14733"/>
<dbReference type="STRING" id="10090.ENSMUSP00000025486"/>
<dbReference type="GlyGen" id="P14733">
    <property type="glycosylation" value="4 sites, 2 N-linked glycans (2 sites), 1 O-linked glycan (1 site)"/>
</dbReference>
<dbReference type="iPTMnet" id="P14733"/>
<dbReference type="PhosphoSitePlus" id="P14733"/>
<dbReference type="SwissPalm" id="P14733"/>
<dbReference type="REPRODUCTION-2DPAGE" id="IPI00230394"/>
<dbReference type="jPOST" id="P14733"/>
<dbReference type="PaxDb" id="10090-ENSMUSP00000025486"/>
<dbReference type="PeptideAtlas" id="P14733"/>
<dbReference type="ProteomicsDB" id="286220"/>
<dbReference type="Pumba" id="P14733"/>
<dbReference type="Antibodypedia" id="3937">
    <property type="antibodies" value="814 antibodies from 49 providers"/>
</dbReference>
<dbReference type="DNASU" id="16906"/>
<dbReference type="Ensembl" id="ENSMUST00000025486.9">
    <property type="protein sequence ID" value="ENSMUSP00000025486.9"/>
    <property type="gene ID" value="ENSMUSG00000024590.9"/>
</dbReference>
<dbReference type="GeneID" id="16906"/>
<dbReference type="KEGG" id="mmu:16906"/>
<dbReference type="UCSC" id="uc012bdd.2">
    <property type="organism name" value="mouse"/>
</dbReference>
<dbReference type="AGR" id="MGI:96795"/>
<dbReference type="CTD" id="4001"/>
<dbReference type="MGI" id="MGI:96795">
    <property type="gene designation" value="Lmnb1"/>
</dbReference>
<dbReference type="VEuPathDB" id="HostDB:ENSMUSG00000024590"/>
<dbReference type="eggNOG" id="KOG0977">
    <property type="taxonomic scope" value="Eukaryota"/>
</dbReference>
<dbReference type="GeneTree" id="ENSGT00940000157199"/>
<dbReference type="HOGENOM" id="CLU_012560_9_2_1"/>
<dbReference type="InParanoid" id="P14733"/>
<dbReference type="OMA" id="GYEMIKT"/>
<dbReference type="OrthoDB" id="102442at2759"/>
<dbReference type="PhylomeDB" id="P14733"/>
<dbReference type="TreeFam" id="TF101181"/>
<dbReference type="Reactome" id="R-MMU-2559584">
    <property type="pathway name" value="Formation of Senescence-Associated Heterochromatin Foci (SAHF)"/>
</dbReference>
<dbReference type="Reactome" id="R-MMU-2980766">
    <property type="pathway name" value="Nuclear Envelope Breakdown"/>
</dbReference>
<dbReference type="Reactome" id="R-MMU-2995383">
    <property type="pathway name" value="Initiation of Nuclear Envelope (NE) Reformation"/>
</dbReference>
<dbReference type="Reactome" id="R-MMU-352238">
    <property type="pathway name" value="Breakdown of the nuclear lamina"/>
</dbReference>
<dbReference type="Reactome" id="R-MMU-4419969">
    <property type="pathway name" value="Depolymerization of the Nuclear Lamina"/>
</dbReference>
<dbReference type="Reactome" id="R-MMU-9013405">
    <property type="pathway name" value="RHOD GTPase cycle"/>
</dbReference>
<dbReference type="Reactome" id="R-MMU-9035034">
    <property type="pathway name" value="RHOF GTPase cycle"/>
</dbReference>
<dbReference type="BioGRID-ORCS" id="16906">
    <property type="hits" value="13 hits in 82 CRISPR screens"/>
</dbReference>
<dbReference type="ChiTaRS" id="Lmnb1">
    <property type="organism name" value="mouse"/>
</dbReference>
<dbReference type="PRO" id="PR:P14733"/>
<dbReference type="Proteomes" id="UP000000589">
    <property type="component" value="Chromosome 18"/>
</dbReference>
<dbReference type="RNAct" id="P14733">
    <property type="molecule type" value="protein"/>
</dbReference>
<dbReference type="Bgee" id="ENSMUSG00000024590">
    <property type="expression patterns" value="Expressed in ventricular zone and 236 other cell types or tissues"/>
</dbReference>
<dbReference type="GO" id="GO:0005638">
    <property type="term" value="C:lamin filament"/>
    <property type="evidence" value="ECO:0000314"/>
    <property type="project" value="MGI"/>
</dbReference>
<dbReference type="GO" id="GO:0005635">
    <property type="term" value="C:nuclear envelope"/>
    <property type="evidence" value="ECO:0000314"/>
    <property type="project" value="BHF-UCL"/>
</dbReference>
<dbReference type="GO" id="GO:0005637">
    <property type="term" value="C:nuclear inner membrane"/>
    <property type="evidence" value="ECO:0000314"/>
    <property type="project" value="MGI"/>
</dbReference>
<dbReference type="GO" id="GO:0005652">
    <property type="term" value="C:nuclear lamina"/>
    <property type="evidence" value="ECO:0000314"/>
    <property type="project" value="UniProtKB"/>
</dbReference>
<dbReference type="GO" id="GO:0016363">
    <property type="term" value="C:nuclear matrix"/>
    <property type="evidence" value="ECO:0000314"/>
    <property type="project" value="MGI"/>
</dbReference>
<dbReference type="GO" id="GO:0034399">
    <property type="term" value="C:nuclear periphery"/>
    <property type="evidence" value="ECO:0000314"/>
    <property type="project" value="MGI"/>
</dbReference>
<dbReference type="GO" id="GO:0005654">
    <property type="term" value="C:nucleoplasm"/>
    <property type="evidence" value="ECO:0000314"/>
    <property type="project" value="BHF-UCL"/>
</dbReference>
<dbReference type="GO" id="GO:0005634">
    <property type="term" value="C:nucleus"/>
    <property type="evidence" value="ECO:0000314"/>
    <property type="project" value="MGI"/>
</dbReference>
<dbReference type="GO" id="GO:0003690">
    <property type="term" value="F:double-stranded DNA binding"/>
    <property type="evidence" value="ECO:0000314"/>
    <property type="project" value="MGI"/>
</dbReference>
<dbReference type="GO" id="GO:0008432">
    <property type="term" value="F:JUN kinase binding"/>
    <property type="evidence" value="ECO:0000303"/>
    <property type="project" value="BHF-UCL"/>
</dbReference>
<dbReference type="GO" id="GO:0043274">
    <property type="term" value="F:phospholipase binding"/>
    <property type="evidence" value="ECO:0000353"/>
    <property type="project" value="BHF-UCL"/>
</dbReference>
<dbReference type="GO" id="GO:1990837">
    <property type="term" value="F:sequence-specific double-stranded DNA binding"/>
    <property type="evidence" value="ECO:0000314"/>
    <property type="project" value="MGI"/>
</dbReference>
<dbReference type="GO" id="GO:0160123">
    <property type="term" value="F:structural constituent of nuclear lamina"/>
    <property type="evidence" value="ECO:0000314"/>
    <property type="project" value="UniProtKB"/>
</dbReference>
<dbReference type="GO" id="GO:0006998">
    <property type="term" value="P:nuclear envelope organization"/>
    <property type="evidence" value="ECO:0000250"/>
    <property type="project" value="UniProtKB"/>
</dbReference>
<dbReference type="GO" id="GO:0010971">
    <property type="term" value="P:positive regulation of G2/M transition of mitotic cell cycle"/>
    <property type="evidence" value="ECO:0000303"/>
    <property type="project" value="BHF-UCL"/>
</dbReference>
<dbReference type="GO" id="GO:0046330">
    <property type="term" value="P:positive regulation of JNK cascade"/>
    <property type="evidence" value="ECO:0000303"/>
    <property type="project" value="BHF-UCL"/>
</dbReference>
<dbReference type="FunFam" id="1.20.5.170:FF:000033">
    <property type="entry name" value="Lamin A/C"/>
    <property type="match status" value="1"/>
</dbReference>
<dbReference type="FunFam" id="1.20.5.1160:FF:000007">
    <property type="entry name" value="Lamin B1"/>
    <property type="match status" value="1"/>
</dbReference>
<dbReference type="FunFam" id="2.60.40.1260:FF:000002">
    <property type="entry name" value="Lamin B1"/>
    <property type="match status" value="1"/>
</dbReference>
<dbReference type="Gene3D" id="1.20.5.170">
    <property type="match status" value="1"/>
</dbReference>
<dbReference type="Gene3D" id="2.60.40.1260">
    <property type="entry name" value="Lamin Tail domain"/>
    <property type="match status" value="1"/>
</dbReference>
<dbReference type="Gene3D" id="1.20.5.1160">
    <property type="entry name" value="Vasodilator-stimulated phosphoprotein"/>
    <property type="match status" value="2"/>
</dbReference>
<dbReference type="InterPro" id="IPR018039">
    <property type="entry name" value="IF_conserved"/>
</dbReference>
<dbReference type="InterPro" id="IPR039008">
    <property type="entry name" value="IF_rod_dom"/>
</dbReference>
<dbReference type="InterPro" id="IPR001322">
    <property type="entry name" value="Lamin_tail_dom"/>
</dbReference>
<dbReference type="InterPro" id="IPR036415">
    <property type="entry name" value="Lamin_tail_dom_sf"/>
</dbReference>
<dbReference type="PANTHER" id="PTHR45721">
    <property type="entry name" value="LAMIN DM0-RELATED"/>
    <property type="match status" value="1"/>
</dbReference>
<dbReference type="PANTHER" id="PTHR45721:SF3">
    <property type="entry name" value="LAMIN-B1"/>
    <property type="match status" value="1"/>
</dbReference>
<dbReference type="Pfam" id="PF00038">
    <property type="entry name" value="Filament"/>
    <property type="match status" value="1"/>
</dbReference>
<dbReference type="Pfam" id="PF00932">
    <property type="entry name" value="LTD"/>
    <property type="match status" value="1"/>
</dbReference>
<dbReference type="SMART" id="SM01391">
    <property type="entry name" value="Filament"/>
    <property type="match status" value="1"/>
</dbReference>
<dbReference type="SUPFAM" id="SSF64593">
    <property type="entry name" value="Intermediate filament protein, coiled coil region"/>
    <property type="match status" value="2"/>
</dbReference>
<dbReference type="SUPFAM" id="SSF74853">
    <property type="entry name" value="Lamin A/C globular tail domain"/>
    <property type="match status" value="1"/>
</dbReference>
<dbReference type="PROSITE" id="PS00226">
    <property type="entry name" value="IF_ROD_1"/>
    <property type="match status" value="1"/>
</dbReference>
<dbReference type="PROSITE" id="PS51842">
    <property type="entry name" value="IF_ROD_2"/>
    <property type="match status" value="1"/>
</dbReference>
<dbReference type="PROSITE" id="PS51841">
    <property type="entry name" value="LTD"/>
    <property type="match status" value="1"/>
</dbReference>
<proteinExistence type="evidence at protein level"/>
<gene>
    <name type="primary">Lmnb1</name>
</gene>
<sequence length="588" mass="66786">MATATPVQQQRAGSRASAPATPLSPTRLSRLQEKEELRELNDRLAVYIDKVRSLETENSALQLQVTEREEVRGRELTGLKALYETELADARRALDDTARERAKLQIELGKFKAEHDQLLLNYAKKESDLSGAQIKLREYEAALNSKDAALATALGDKKSLEGDLEDLKDQIAQLEASLSAAKKQLADETLLKVDLENRCQSLTEDLEFRKNMYEEEINETRRKHETRLVEVDSGRQIEYEYKLAQALHEMREQHDAQVRLYKEELEQTYHAKLENARLSSEMNTSTVNSAREELMESRMRIESLSSQLSNLQKESRACLERIQELEDMLAKERDNSRRMLSDREREMAEIRDQMQQQLSDYEQLLDVKLALDMEISAYRKLLEGEEERLKLSPSPSSRVTVSRASSSRSVRTTRGKRKRVDVEESEASSSVSISHSASATGNVCIEEIDVDGKFIRLKNTSEQDQPMGGWEMIRKIGDTSVSYKYTSRYVLKAGQTVTVWAANAGVTASPPTDLIWKNQNSWGTGEDVKVILKNSQGEEVAQRSTVFKTTIPEEEEEEEEEPIGVAVEEERFHQQGAPRASNKSCAIM</sequence>
<protein>
    <recommendedName>
        <fullName>Lamin-B1</fullName>
    </recommendedName>
</protein>
<name>LMNB1_MOUSE</name>
<comment type="function">
    <text evidence="9">Lamins are intermediate filament proteins that assemble into a filamentous meshwork, and which constitute the major components of the nuclear lamina, a fibrous layer on the nucleoplasmic side of the inner nuclear membrane (PubMed:28241138). Lamins provide a framework for the nuclear envelope, bridging the nuclear envelope and chromatin, thereby playing an important role in nuclear assembly, chromatin organization, nuclear membrane and telomere dynamics (PubMed:28241138). The structural integrity of the lamina is strictly controlled by the cell cycle, as seen by the disintegration and formation of the nuclear envelope in prophase and telophase, respectively (PubMed:28241138).</text>
</comment>
<comment type="subunit">
    <text evidence="2 9">Homodimer (PubMed:28241138). Lamin dimers then assemble into dimeric head-to-tail polymers (PubMed:28241138). Ultimately, two head-to-tail polymers assemble laterally into a protofilament with a uniformly shaped rod of 3.5 nm in diameter (PubMed:28241138). Interacts with SPAG4 and SEPT12 (By similarity).</text>
</comment>
<comment type="subcellular location">
    <subcellularLocation>
        <location evidence="9">Nucleus lamina</location>
    </subcellularLocation>
</comment>
<comment type="PTM">
    <text evidence="2">B-type lamins undergo a series of modifications, such as farnesylation and phosphorylation. Increased phosphorylation of the lamins occurs before envelope disintegration and probably plays a role in regulating lamin associations.</text>
</comment>
<comment type="PTM">
    <text evidence="1">Phosphorylation plays a key role in lamin organization, subcellular localization and nuclear envelope disintegration (By similarity). Phosphorylation by CDK1 at Ser-24 and Ser-394 at the onset of mitosis drives lamin disassembly and nuclear envelope breakdown (By similarity).</text>
</comment>
<comment type="similarity">
    <text evidence="7">Belongs to the intermediate filament family.</text>
</comment>
<accession>P14733</accession>
<accession>Q61791</accession>
<evidence type="ECO:0000250" key="1">
    <source>
        <dbReference type="UniProtKB" id="P02545"/>
    </source>
</evidence>
<evidence type="ECO:0000250" key="2">
    <source>
        <dbReference type="UniProtKB" id="P20700"/>
    </source>
</evidence>
<evidence type="ECO:0000250" key="3">
    <source>
        <dbReference type="UniProtKB" id="P21619"/>
    </source>
</evidence>
<evidence type="ECO:0000250" key="4">
    <source>
        <dbReference type="UniProtKB" id="P70615"/>
    </source>
</evidence>
<evidence type="ECO:0000255" key="5"/>
<evidence type="ECO:0000255" key="6">
    <source>
        <dbReference type="PROSITE-ProRule" id="PRU01187"/>
    </source>
</evidence>
<evidence type="ECO:0000255" key="7">
    <source>
        <dbReference type="PROSITE-ProRule" id="PRU01188"/>
    </source>
</evidence>
<evidence type="ECO:0000256" key="8">
    <source>
        <dbReference type="SAM" id="MobiDB-lite"/>
    </source>
</evidence>
<evidence type="ECO:0000269" key="9">
    <source>
    </source>
</evidence>
<evidence type="ECO:0000305" key="10"/>
<evidence type="ECO:0007744" key="11">
    <source>
    </source>
</evidence>
<evidence type="ECO:0007744" key="12">
    <source>
    </source>
</evidence>
<evidence type="ECO:0007744" key="13">
    <source>
    </source>
</evidence>
<evidence type="ECO:0007744" key="14">
    <source>
    </source>
</evidence>
<feature type="initiator methionine" description="Removed" evidence="2">
    <location>
        <position position="1"/>
    </location>
</feature>
<feature type="chain" id="PRO_0000063817" description="Lamin-B1">
    <location>
        <begin position="2"/>
        <end position="585"/>
    </location>
</feature>
<feature type="propeptide" id="PRO_0000403467" description="Removed in mature form" evidence="2">
    <location>
        <begin position="586"/>
        <end position="588"/>
    </location>
</feature>
<feature type="domain" description="IF rod" evidence="7">
    <location>
        <begin position="33"/>
        <end position="389"/>
    </location>
</feature>
<feature type="domain" description="LTD" evidence="6">
    <location>
        <begin position="431"/>
        <end position="547"/>
    </location>
</feature>
<feature type="region of interest" description="Disordered" evidence="8">
    <location>
        <begin position="1"/>
        <end position="34"/>
    </location>
</feature>
<feature type="region of interest" description="Head">
    <location>
        <begin position="2"/>
        <end position="35"/>
    </location>
</feature>
<feature type="region of interest" description="Coil 1A">
    <location>
        <begin position="36"/>
        <end position="70"/>
    </location>
</feature>
<feature type="region of interest" description="Linker 1">
    <location>
        <begin position="71"/>
        <end position="82"/>
    </location>
</feature>
<feature type="region of interest" description="Coil 1B">
    <location>
        <begin position="83"/>
        <end position="216"/>
    </location>
</feature>
<feature type="region of interest" description="Linker 2">
    <location>
        <begin position="217"/>
        <end position="244"/>
    </location>
</feature>
<feature type="region of interest" description="Coil 2">
    <location>
        <begin position="245"/>
        <end position="387"/>
    </location>
</feature>
<feature type="region of interest" description="Tail">
    <location>
        <begin position="388"/>
        <end position="588"/>
    </location>
</feature>
<feature type="region of interest" description="Disordered" evidence="8">
    <location>
        <begin position="391"/>
        <end position="433"/>
    </location>
</feature>
<feature type="short sequence motif" description="Nuclear localization signal" evidence="5">
    <location>
        <begin position="416"/>
        <end position="421"/>
    </location>
</feature>
<feature type="compositionally biased region" description="Polar residues" evidence="8">
    <location>
        <begin position="1"/>
        <end position="12"/>
    </location>
</feature>
<feature type="compositionally biased region" description="Low complexity" evidence="8">
    <location>
        <begin position="391"/>
        <end position="410"/>
    </location>
</feature>
<feature type="modified residue" description="N-acetylalanine" evidence="2">
    <location>
        <position position="2"/>
    </location>
</feature>
<feature type="modified residue" description="Phosphothreonine" evidence="2">
    <location>
        <position position="3"/>
    </location>
</feature>
<feature type="modified residue" description="Phosphothreonine" evidence="2">
    <location>
        <position position="5"/>
    </location>
</feature>
<feature type="modified residue" description="Omega-N-methylarginine" evidence="2">
    <location>
        <position position="15"/>
    </location>
</feature>
<feature type="modified residue" description="Phosphoserine" evidence="13">
    <location>
        <position position="17"/>
    </location>
</feature>
<feature type="modified residue" description="Phosphothreonine" evidence="11 13">
    <location>
        <position position="21"/>
    </location>
</feature>
<feature type="modified residue" description="Phosphoserine" evidence="12">
    <location>
        <position position="24"/>
    </location>
</feature>
<feature type="modified residue" description="Phosphothreonine" evidence="2">
    <location>
        <position position="26"/>
    </location>
</feature>
<feature type="modified residue" description="Phosphoserine" evidence="2">
    <location>
        <position position="29"/>
    </location>
</feature>
<feature type="modified residue" description="N6-acetyllysine" evidence="14">
    <location>
        <position position="112"/>
    </location>
</feature>
<feature type="modified residue" description="Phosphoserine" evidence="4">
    <location>
        <position position="127"/>
    </location>
</feature>
<feature type="modified residue" description="N6-acetyllysine; alternate" evidence="2">
    <location>
        <position position="158"/>
    </location>
</feature>
<feature type="modified residue" description="Phosphoserine" evidence="4">
    <location>
        <position position="159"/>
    </location>
</feature>
<feature type="modified residue" description="Phosphoserine" evidence="2">
    <location>
        <position position="201"/>
    </location>
</feature>
<feature type="modified residue" description="Phosphoserine" evidence="2">
    <location>
        <position position="233"/>
    </location>
</feature>
<feature type="modified residue" description="N6-acetyllysine; alternate" evidence="14">
    <location>
        <position position="272"/>
    </location>
</feature>
<feature type="modified residue" description="Phosphoserine" evidence="2">
    <location>
        <position position="279"/>
    </location>
</feature>
<feature type="modified residue" description="Phosphoserine" evidence="2">
    <location>
        <position position="303"/>
    </location>
</feature>
<feature type="modified residue" description="N6-acetyllysine; alternate" evidence="14">
    <location>
        <position position="331"/>
    </location>
</feature>
<feature type="modified residue" description="Phosphoserine" evidence="2">
    <location>
        <position position="376"/>
    </location>
</feature>
<feature type="modified residue" description="Phosphoserine" evidence="1">
    <location>
        <position position="394"/>
    </location>
</feature>
<feature type="modified residue" description="Omega-N-methylarginine" evidence="3">
    <location>
        <position position="414"/>
    </location>
</feature>
<feature type="modified residue" description="N6-acetyllysine" evidence="2">
    <location>
        <position position="484"/>
    </location>
</feature>
<feature type="modified residue" description="Phosphoserine" evidence="2">
    <location>
        <position position="535"/>
    </location>
</feature>
<feature type="modified residue" description="Cysteine methyl ester" evidence="2">
    <location>
        <position position="585"/>
    </location>
</feature>
<feature type="lipid moiety-binding region" description="S-farnesyl cysteine" evidence="2">
    <location>
        <position position="585"/>
    </location>
</feature>
<feature type="glycosylation site" description="O-linked (GlcNAc) threonine" evidence="2">
    <location>
        <position position="400"/>
    </location>
</feature>
<feature type="disulfide bond" description="Interchain" evidence="2">
    <location>
        <position position="318"/>
    </location>
</feature>
<feature type="cross-link" description="Glycyl lysine isopeptide (Lys-Gly) (interchain with G-Cter in SUMO2)" evidence="2">
    <location>
        <position position="103"/>
    </location>
</feature>
<feature type="cross-link" description="Glycyl lysine isopeptide (Lys-Gly) (interchain with G-Cter in SUMO2)" evidence="2">
    <location>
        <position position="124"/>
    </location>
</feature>
<feature type="cross-link" description="Glycyl lysine isopeptide (Lys-Gly) (interchain with G-Cter in SUMO2)" evidence="2">
    <location>
        <position position="146"/>
    </location>
</feature>
<feature type="cross-link" description="Glycyl lysine isopeptide (Lys-Gly) (interchain with G-Cter in SUMO2); alternate" evidence="2">
    <location>
        <position position="158"/>
    </location>
</feature>
<feature type="cross-link" description="Glycyl lysine isopeptide (Lys-Gly) (interchain with G-Cter in SUMO2)" evidence="2">
    <location>
        <position position="182"/>
    </location>
</feature>
<feature type="cross-link" description="Glycyl lysine isopeptide (Lys-Gly) (interchain with G-Cter in SUMO2)" evidence="2">
    <location>
        <position position="242"/>
    </location>
</feature>
<feature type="cross-link" description="Glycyl lysine isopeptide (Lys-Gly) (interchain with G-Cter in SUMO2)" evidence="2">
    <location>
        <position position="262"/>
    </location>
</feature>
<feature type="cross-link" description="Glycyl lysine isopeptide (Lys-Gly) (interchain with G-Cter in SUMO2); alternate" evidence="2">
    <location>
        <position position="272"/>
    </location>
</feature>
<feature type="cross-link" description="Glycyl lysine isopeptide (Lys-Gly) (interchain with G-Cter in SUMO2)" evidence="2">
    <location>
        <position position="313"/>
    </location>
</feature>
<feature type="cross-link" description="Glycyl lysine isopeptide (Lys-Gly) (interchain with G-Cter in SUMO2); alternate" evidence="2">
    <location>
        <position position="331"/>
    </location>
</feature>
<feature type="cross-link" description="Glycyl lysine isopeptide (Lys-Gly) (interchain with G-Cter in SUMO2)" evidence="2">
    <location>
        <position position="533"/>
    </location>
</feature>
<feature type="cross-link" description="Glycyl lysine isopeptide (Lys-Gly) (interchain with G-Cter in SUMO2)" evidence="2">
    <location>
        <position position="548"/>
    </location>
</feature>
<feature type="sequence conflict" description="In Ref. 1; CAA34677/AAC96023." evidence="10" ref="1">
    <original>S</original>
    <variation>W</variation>
    <location>
        <position position="581"/>
    </location>
</feature>
<organism>
    <name type="scientific">Mus musculus</name>
    <name type="common">Mouse</name>
    <dbReference type="NCBI Taxonomy" id="10090"/>
    <lineage>
        <taxon>Eukaryota</taxon>
        <taxon>Metazoa</taxon>
        <taxon>Chordata</taxon>
        <taxon>Craniata</taxon>
        <taxon>Vertebrata</taxon>
        <taxon>Euteleostomi</taxon>
        <taxon>Mammalia</taxon>
        <taxon>Eutheria</taxon>
        <taxon>Euarchontoglires</taxon>
        <taxon>Glires</taxon>
        <taxon>Rodentia</taxon>
        <taxon>Myomorpha</taxon>
        <taxon>Muroidea</taxon>
        <taxon>Muridae</taxon>
        <taxon>Murinae</taxon>
        <taxon>Mus</taxon>
        <taxon>Mus</taxon>
    </lineage>
</organism>